<evidence type="ECO:0000269" key="1">
    <source>
    </source>
</evidence>
<evidence type="ECO:0000303" key="2">
    <source>
    </source>
</evidence>
<evidence type="ECO:0000305" key="3"/>
<evidence type="ECO:0000305" key="4">
    <source>
    </source>
</evidence>
<keyword id="KW-0102">Bromination</keyword>
<keyword id="KW-0903">Direct protein sequencing</keyword>
<keyword id="KW-1015">Disulfide bond</keyword>
<keyword id="KW-0964">Secreted</keyword>
<keyword id="KW-0800">Toxin</keyword>
<protein>
    <recommendedName>
        <fullName evidence="2">Conotoxin Mo1274</fullName>
    </recommendedName>
</protein>
<accession>P0C2F2</accession>
<organism>
    <name type="scientific">Conus monile</name>
    <name type="common">Necklace cone</name>
    <dbReference type="NCBI Taxonomy" id="351660"/>
    <lineage>
        <taxon>Eukaryota</taxon>
        <taxon>Metazoa</taxon>
        <taxon>Spiralia</taxon>
        <taxon>Lophotrochozoa</taxon>
        <taxon>Mollusca</taxon>
        <taxon>Gastropoda</taxon>
        <taxon>Caenogastropoda</taxon>
        <taxon>Neogastropoda</taxon>
        <taxon>Conoidea</taxon>
        <taxon>Conidae</taxon>
        <taxon>Conus</taxon>
        <taxon>Strategoconus</taxon>
    </lineage>
</organism>
<dbReference type="ConoServer" id="1617">
    <property type="toxin name" value="Mo1274"/>
</dbReference>
<dbReference type="GO" id="GO:0005576">
    <property type="term" value="C:extracellular region"/>
    <property type="evidence" value="ECO:0007669"/>
    <property type="project" value="UniProtKB-SubCell"/>
</dbReference>
<dbReference type="GO" id="GO:0090729">
    <property type="term" value="F:toxin activity"/>
    <property type="evidence" value="ECO:0007669"/>
    <property type="project" value="UniProtKB-KW"/>
</dbReference>
<comment type="subcellular location">
    <subcellularLocation>
        <location evidence="1">Secreted</location>
    </subcellularLocation>
</comment>
<comment type="tissue specificity">
    <text evidence="4">Expressed by the venom duct.</text>
</comment>
<comment type="domain">
    <text>The cysteine framework is V (CC-CC).</text>
</comment>
<comment type="mass spectrometry" mass="1274.32" method="Electrospray" evidence="1"/>
<comment type="similarity">
    <text evidence="3">Belongs to the conotoxin T superfamily.</text>
</comment>
<proteinExistence type="evidence at protein level"/>
<reference key="1">
    <citation type="journal article" date="2006" name="Anal. Chem.">
        <title>De novo sequencing and disulfide mapping of a bromotryptophan-containing conotoxin by Fourier transform ion cyclotron resonance mass spectrometry.</title>
        <authorList>
            <person name="Nair S.S."/>
            <person name="Nilsson C.L."/>
            <person name="Emmett M.R."/>
            <person name="Schaub T.M."/>
            <person name="Gowd K.H."/>
            <person name="Thakur S.S."/>
            <person name="Krishnan K.S."/>
            <person name="Balaram P."/>
            <person name="Marshall A.G."/>
        </authorList>
    </citation>
    <scope>PROTEIN SEQUENCE</scope>
    <scope>SUBCELLULAR LOCATION</scope>
    <scope>MASS SPECTROMETRY</scope>
    <scope>DISULFIDE BONDS</scope>
    <scope>BROMINATION AT TRP-3</scope>
    <source>
        <tissue>Venom</tissue>
    </source>
</reference>
<sequence length="11" mass="1201">GNWCCSARVCC</sequence>
<feature type="peptide" id="PRO_0000274073" description="Conotoxin Mo1274">
    <location>
        <begin position="1"/>
        <end position="11"/>
    </location>
</feature>
<feature type="modified residue" description="6'-bromotryptophan" evidence="1">
    <location>
        <position position="3"/>
    </location>
</feature>
<feature type="disulfide bond" evidence="1">
    <location>
        <begin position="4"/>
        <end position="10"/>
    </location>
</feature>
<feature type="disulfide bond" evidence="1">
    <location>
        <begin position="5"/>
        <end position="11"/>
    </location>
</feature>
<name>CT274_CONMO</name>